<gene>
    <name evidence="3" type="primary">adrK</name>
    <name type="ORF">Pc22g22920</name>
</gene>
<accession>B6HV39</accession>
<dbReference type="EC" id="2.1.3.-" evidence="5"/>
<dbReference type="EMBL" id="AM920437">
    <property type="protein sequence ID" value="CAP99580.1"/>
    <property type="molecule type" value="Genomic_DNA"/>
</dbReference>
<dbReference type="RefSeq" id="XP_002566186.1">
    <property type="nucleotide sequence ID" value="XM_002566140.1"/>
</dbReference>
<dbReference type="SMR" id="B6HV39"/>
<dbReference type="STRING" id="500485.B6HV39"/>
<dbReference type="VEuPathDB" id="FungiDB:PCH_Pc22g22920"/>
<dbReference type="eggNOG" id="ENOG502S9MA">
    <property type="taxonomic scope" value="Eukaryota"/>
</dbReference>
<dbReference type="HOGENOM" id="CLU_051542_0_0_1"/>
<dbReference type="OMA" id="KIRDEAW"/>
<dbReference type="OrthoDB" id="2094832at2759"/>
<dbReference type="BioCyc" id="PCHR:PC22G22920-MONOMER"/>
<dbReference type="UniPathway" id="UPA00213"/>
<dbReference type="Proteomes" id="UP000000724">
    <property type="component" value="Contig Pc00c22"/>
</dbReference>
<dbReference type="GO" id="GO:0008168">
    <property type="term" value="F:methyltransferase activity"/>
    <property type="evidence" value="ECO:0007669"/>
    <property type="project" value="UniProtKB-KW"/>
</dbReference>
<dbReference type="GO" id="GO:0032259">
    <property type="term" value="P:methylation"/>
    <property type="evidence" value="ECO:0007669"/>
    <property type="project" value="UniProtKB-KW"/>
</dbReference>
<dbReference type="GO" id="GO:0016114">
    <property type="term" value="P:terpenoid biosynthetic process"/>
    <property type="evidence" value="ECO:0007669"/>
    <property type="project" value="UniProtKB-UniPathway"/>
</dbReference>
<dbReference type="Gene3D" id="3.40.50.150">
    <property type="entry name" value="Vaccinia Virus protein VP39"/>
    <property type="match status" value="1"/>
</dbReference>
<dbReference type="InterPro" id="IPR051654">
    <property type="entry name" value="Meroterpenoid_MTases"/>
</dbReference>
<dbReference type="InterPro" id="IPR029063">
    <property type="entry name" value="SAM-dependent_MTases_sf"/>
</dbReference>
<dbReference type="PANTHER" id="PTHR35897">
    <property type="entry name" value="METHYLTRANSFERASE AUSD"/>
    <property type="match status" value="1"/>
</dbReference>
<dbReference type="PANTHER" id="PTHR35897:SF1">
    <property type="entry name" value="METHYLTRANSFERASE AUSD"/>
    <property type="match status" value="1"/>
</dbReference>
<dbReference type="SUPFAM" id="SSF53335">
    <property type="entry name" value="S-adenosyl-L-methionine-dependent methyltransferases"/>
    <property type="match status" value="1"/>
</dbReference>
<keyword id="KW-0489">Methyltransferase</keyword>
<keyword id="KW-1185">Reference proteome</keyword>
<keyword id="KW-0949">S-adenosyl-L-methionine</keyword>
<keyword id="KW-0808">Transferase</keyword>
<organism>
    <name type="scientific">Penicillium rubens (strain ATCC 28089 / DSM 1075 / NRRL 1951 / Wisconsin 54-1255)</name>
    <name type="common">Penicillium chrysogenum</name>
    <dbReference type="NCBI Taxonomy" id="500485"/>
    <lineage>
        <taxon>Eukaryota</taxon>
        <taxon>Fungi</taxon>
        <taxon>Dikarya</taxon>
        <taxon>Ascomycota</taxon>
        <taxon>Pezizomycotina</taxon>
        <taxon>Eurotiomycetes</taxon>
        <taxon>Eurotiomycetidae</taxon>
        <taxon>Eurotiales</taxon>
        <taxon>Aspergillaceae</taxon>
        <taxon>Penicillium</taxon>
        <taxon>Penicillium chrysogenum species complex</taxon>
    </lineage>
</organism>
<feature type="chain" id="PRO_0000446498" description="Methyltransferase adrK">
    <location>
        <begin position="1"/>
        <end position="277"/>
    </location>
</feature>
<feature type="binding site" evidence="1">
    <location>
        <begin position="123"/>
        <end position="124"/>
    </location>
    <ligand>
        <name>S-adenosyl-L-methionine</name>
        <dbReference type="ChEBI" id="CHEBI:59789"/>
    </ligand>
</feature>
<feature type="binding site" evidence="1">
    <location>
        <begin position="150"/>
        <end position="151"/>
    </location>
    <ligand>
        <name>S-adenosyl-L-methionine</name>
        <dbReference type="ChEBI" id="CHEBI:59789"/>
    </ligand>
</feature>
<feature type="binding site" evidence="1">
    <location>
        <begin position="151"/>
        <end position="152"/>
    </location>
    <ligand>
        <name>S-adenosyl-L-methionine</name>
        <dbReference type="ChEBI" id="CHEBI:59789"/>
    </ligand>
</feature>
<evidence type="ECO:0000250" key="1">
    <source>
        <dbReference type="UniProtKB" id="Q3J7D1"/>
    </source>
</evidence>
<evidence type="ECO:0000269" key="2">
    <source ref="2"/>
</evidence>
<evidence type="ECO:0000303" key="3">
    <source ref="2"/>
</evidence>
<evidence type="ECO:0000305" key="4"/>
<evidence type="ECO:0000305" key="5">
    <source ref="2"/>
</evidence>
<sequence length="277" mass="31375">MHPDSQLETAVKSGFDPKSLYSTELTKVNEPARTILEKYSKIPADNILQHVKDLRDRAFAFPYACIGQASFLELSIASSPCYPEMLDRVKKGDRLLDLGCAFGQELRQLIYDGAPSQNLYGSDLRPEFLELGLDLFMDRPTIKSRFIDADVLDDKSALVTQLTGELNIVYISLFLHVFDFDTQIKVAKRALELLAPKAGSLIVCRVVACRDQAIGNATNARLPYYYHDLASWNRLWERVQEETGLKLKVDNWEQDDALAKKHPLEGIYMLGSSIRRE</sequence>
<proteinExistence type="evidence at protein level"/>
<protein>
    <recommendedName>
        <fullName evidence="3">Methyltransferase adrK</fullName>
        <ecNumber evidence="5">2.1.3.-</ecNumber>
    </recommendedName>
    <alternativeName>
        <fullName evidence="3">Andrastin A biosynthesis cluster protein K</fullName>
    </alternativeName>
</protein>
<comment type="function">
    <text evidence="2">Methyltransferase; part of the gene cluster that mediates the biosynthesis of andrastins, meroterpenoid compounds that exhibit inhibitory activity against ras farnesyltransferase, suggesting that they could be promising leads for antitumor agents (Ref.2). The first step of the pathway is the synthesis of 3,5-dimethylorsellinic acid (DMOA) by the polyketide synthase adrD via condensation of one acetyl-CoA starter unit with 3 malonyl-CoA units and 2 methylations (Ref.2). DMAO is then converted to farnesyl-DMAO by the prenyltransferase adrG (Ref.2). The methyltransferase adrK catalyzes the methylation of the carboxyl group of farnesyl-DMAO to farnesyl-DMAO methyl ester which is further converted to epoxyfarnesyl-DMAO methyl ester by the FAD-dependent monooxygenase adrH (Ref.2). The terpene cyclase adrI then catalyzes the carbon skeletal rearrangement to generate the andrastin E, the first compound in the pathway having the andrastin scaffold, with the tetracyclic ring system (Ref.2). The post-cyclization tailoring enzymes adrF, adrE, adrJ, and adrA, are involved in the conversion of andrastin E into andrastin A. The short chain dehydrogenase adrF is responsible for the oxidation of the C-3 a hydroxyl group of andrastin E to yield the corresponding ketone, andrastin D. The ketoreductase adrE stereoselectively reduces the carbonyl moiety to reverse the stereochemistry of the C-3 position to yield andrastin F. The acetyltransferase adrJ is the acetyltransferase that attaches the acetyl group to the C-3 hydroxyl group of andrastin F to yield andrastin C. Finally, the cytochrome P450 monooxygenase adrA catalyzes two sequential oxidation reactions of the C-23 methyl group, to generate the corresponding alcohol andrastin B, and aldehyde andrastin A (Ref.2).</text>
</comment>
<comment type="pathway">
    <text evidence="5">Secondary metabolite biosynthesis; terpenoid biosynthesis.</text>
</comment>
<comment type="subunit">
    <text evidence="1">Homodimer.</text>
</comment>
<comment type="similarity">
    <text evidence="4">Belongs to the class I-like SAM-binding methyltransferase superfamily.</text>
</comment>
<reference key="1">
    <citation type="journal article" date="2008" name="Nat. Biotechnol.">
        <title>Genome sequencing and analysis of the filamentous fungus Penicillium chrysogenum.</title>
        <authorList>
            <person name="van den Berg M.A."/>
            <person name="Albang R."/>
            <person name="Albermann K."/>
            <person name="Badger J.H."/>
            <person name="Daran J.-M."/>
            <person name="Driessen A.J.M."/>
            <person name="Garcia-Estrada C."/>
            <person name="Fedorova N.D."/>
            <person name="Harris D.M."/>
            <person name="Heijne W.H.M."/>
            <person name="Joardar V.S."/>
            <person name="Kiel J.A.K.W."/>
            <person name="Kovalchuk A."/>
            <person name="Martin J.F."/>
            <person name="Nierman W.C."/>
            <person name="Nijland J.G."/>
            <person name="Pronk J.T."/>
            <person name="Roubos J.A."/>
            <person name="van der Klei I.J."/>
            <person name="van Peij N.N.M.E."/>
            <person name="Veenhuis M."/>
            <person name="von Doehren H."/>
            <person name="Wagner C."/>
            <person name="Wortman J.R."/>
            <person name="Bovenberg R.A.L."/>
        </authorList>
    </citation>
    <scope>NUCLEOTIDE SEQUENCE [LARGE SCALE GENOMIC DNA]</scope>
    <source>
        <strain>ATCC 28089 / DSM 1075 / NRRL 1951 / Wisconsin 54-1255</strain>
    </source>
</reference>
<reference key="2">
    <citation type="journal article" date="2013" name="Tetrahedron">
        <title>Reconstituted biosynthesis of fungal meroterpenoid andrastin A.</title>
        <authorList>
            <person name="Matsuda Y."/>
            <person name="Awakawa T."/>
            <person name="Abe I."/>
        </authorList>
    </citation>
    <scope>IDENTIFICATION</scope>
    <scope>FUNCTION</scope>
    <scope>CATALYTIC ACTIVITY</scope>
    <scope>PATHWAY</scope>
</reference>
<name>ADRK_PENRW</name>